<accession>A5FSN9</accession>
<sequence length="153" mass="16851">MKAVVQRVSRASVRVSGETVGEIGPGLAVLLGVAEGDTEEDAEYLASKIINLRIFSDAEGKFNLSLKDLCREMLVVSQFTLIADTRKGRRPSFIEAAQPQEADGLYNVFIRLCREEGTQVATGQFGAMMMLEIYNDGPVTIILDSRDRLNPRL</sequence>
<feature type="chain" id="PRO_1000081649" description="D-aminoacyl-tRNA deacylase">
    <location>
        <begin position="1"/>
        <end position="153"/>
    </location>
</feature>
<feature type="short sequence motif" description="Gly-cisPro motif, important for rejection of L-amino acids" evidence="1">
    <location>
        <begin position="137"/>
        <end position="138"/>
    </location>
</feature>
<organism>
    <name type="scientific">Dehalococcoides mccartyi (strain ATCC BAA-2100 / JCM 16839 / KCTC 5957 / BAV1)</name>
    <dbReference type="NCBI Taxonomy" id="216389"/>
    <lineage>
        <taxon>Bacteria</taxon>
        <taxon>Bacillati</taxon>
        <taxon>Chloroflexota</taxon>
        <taxon>Dehalococcoidia</taxon>
        <taxon>Dehalococcoidales</taxon>
        <taxon>Dehalococcoidaceae</taxon>
        <taxon>Dehalococcoides</taxon>
    </lineage>
</organism>
<dbReference type="EC" id="3.1.1.96" evidence="1"/>
<dbReference type="EMBL" id="CP000688">
    <property type="protein sequence ID" value="ABQ16610.1"/>
    <property type="molecule type" value="Genomic_DNA"/>
</dbReference>
<dbReference type="SMR" id="A5FSN9"/>
<dbReference type="KEGG" id="deb:DehaBAV1_0018"/>
<dbReference type="PATRIC" id="fig|216389.18.peg.18"/>
<dbReference type="HOGENOM" id="CLU_076901_1_0_0"/>
<dbReference type="GO" id="GO:0005737">
    <property type="term" value="C:cytoplasm"/>
    <property type="evidence" value="ECO:0007669"/>
    <property type="project" value="UniProtKB-SubCell"/>
</dbReference>
<dbReference type="GO" id="GO:0051500">
    <property type="term" value="F:D-tyrosyl-tRNA(Tyr) deacylase activity"/>
    <property type="evidence" value="ECO:0007669"/>
    <property type="project" value="TreeGrafter"/>
</dbReference>
<dbReference type="GO" id="GO:0106026">
    <property type="term" value="F:Gly-tRNA(Ala) deacylase activity"/>
    <property type="evidence" value="ECO:0007669"/>
    <property type="project" value="UniProtKB-UniRule"/>
</dbReference>
<dbReference type="GO" id="GO:0043908">
    <property type="term" value="F:Ser(Gly)-tRNA(Ala) hydrolase activity"/>
    <property type="evidence" value="ECO:0007669"/>
    <property type="project" value="UniProtKB-UniRule"/>
</dbReference>
<dbReference type="GO" id="GO:0000049">
    <property type="term" value="F:tRNA binding"/>
    <property type="evidence" value="ECO:0007669"/>
    <property type="project" value="UniProtKB-UniRule"/>
</dbReference>
<dbReference type="GO" id="GO:0019478">
    <property type="term" value="P:D-amino acid catabolic process"/>
    <property type="evidence" value="ECO:0007669"/>
    <property type="project" value="UniProtKB-UniRule"/>
</dbReference>
<dbReference type="CDD" id="cd00563">
    <property type="entry name" value="Dtyr_deacylase"/>
    <property type="match status" value="1"/>
</dbReference>
<dbReference type="FunFam" id="3.50.80.10:FF:000001">
    <property type="entry name" value="D-aminoacyl-tRNA deacylase"/>
    <property type="match status" value="1"/>
</dbReference>
<dbReference type="Gene3D" id="3.50.80.10">
    <property type="entry name" value="D-tyrosyl-tRNA(Tyr) deacylase"/>
    <property type="match status" value="1"/>
</dbReference>
<dbReference type="HAMAP" id="MF_00518">
    <property type="entry name" value="Deacylase_Dtd"/>
    <property type="match status" value="1"/>
</dbReference>
<dbReference type="InterPro" id="IPR003732">
    <property type="entry name" value="Daa-tRNA_deacyls_DTD"/>
</dbReference>
<dbReference type="InterPro" id="IPR023509">
    <property type="entry name" value="DTD-like_sf"/>
</dbReference>
<dbReference type="NCBIfam" id="TIGR00256">
    <property type="entry name" value="D-aminoacyl-tRNA deacylase"/>
    <property type="match status" value="1"/>
</dbReference>
<dbReference type="PANTHER" id="PTHR10472:SF5">
    <property type="entry name" value="D-AMINOACYL-TRNA DEACYLASE 1"/>
    <property type="match status" value="1"/>
</dbReference>
<dbReference type="PANTHER" id="PTHR10472">
    <property type="entry name" value="D-TYROSYL-TRNA TYR DEACYLASE"/>
    <property type="match status" value="1"/>
</dbReference>
<dbReference type="Pfam" id="PF02580">
    <property type="entry name" value="Tyr_Deacylase"/>
    <property type="match status" value="1"/>
</dbReference>
<dbReference type="SUPFAM" id="SSF69500">
    <property type="entry name" value="DTD-like"/>
    <property type="match status" value="1"/>
</dbReference>
<name>DTD_DEHMB</name>
<gene>
    <name evidence="1" type="primary">dtd</name>
    <name type="ordered locus">DehaBAV1_0018</name>
</gene>
<protein>
    <recommendedName>
        <fullName evidence="1">D-aminoacyl-tRNA deacylase</fullName>
        <shortName evidence="1">DTD</shortName>
        <ecNumber evidence="1">3.1.1.96</ecNumber>
    </recommendedName>
    <alternativeName>
        <fullName evidence="1">Gly-tRNA(Ala) deacylase</fullName>
    </alternativeName>
</protein>
<proteinExistence type="inferred from homology"/>
<keyword id="KW-0963">Cytoplasm</keyword>
<keyword id="KW-0378">Hydrolase</keyword>
<keyword id="KW-0694">RNA-binding</keyword>
<keyword id="KW-0820">tRNA-binding</keyword>
<comment type="function">
    <text evidence="1">An aminoacyl-tRNA editing enzyme that deacylates mischarged D-aminoacyl-tRNAs. Also deacylates mischarged glycyl-tRNA(Ala), protecting cells against glycine mischarging by AlaRS. Acts via tRNA-based rather than protein-based catalysis; rejects L-amino acids rather than detecting D-amino acids in the active site. By recycling D-aminoacyl-tRNA to D-amino acids and free tRNA molecules, this enzyme counteracts the toxicity associated with the formation of D-aminoacyl-tRNA entities in vivo and helps enforce protein L-homochirality.</text>
</comment>
<comment type="catalytic activity">
    <reaction evidence="1">
        <text>glycyl-tRNA(Ala) + H2O = tRNA(Ala) + glycine + H(+)</text>
        <dbReference type="Rhea" id="RHEA:53744"/>
        <dbReference type="Rhea" id="RHEA-COMP:9657"/>
        <dbReference type="Rhea" id="RHEA-COMP:13640"/>
        <dbReference type="ChEBI" id="CHEBI:15377"/>
        <dbReference type="ChEBI" id="CHEBI:15378"/>
        <dbReference type="ChEBI" id="CHEBI:57305"/>
        <dbReference type="ChEBI" id="CHEBI:78442"/>
        <dbReference type="ChEBI" id="CHEBI:78522"/>
        <dbReference type="EC" id="3.1.1.96"/>
    </reaction>
</comment>
<comment type="catalytic activity">
    <reaction evidence="1">
        <text>a D-aminoacyl-tRNA + H2O = a tRNA + a D-alpha-amino acid + H(+)</text>
        <dbReference type="Rhea" id="RHEA:13953"/>
        <dbReference type="Rhea" id="RHEA-COMP:10123"/>
        <dbReference type="Rhea" id="RHEA-COMP:10124"/>
        <dbReference type="ChEBI" id="CHEBI:15377"/>
        <dbReference type="ChEBI" id="CHEBI:15378"/>
        <dbReference type="ChEBI" id="CHEBI:59871"/>
        <dbReference type="ChEBI" id="CHEBI:78442"/>
        <dbReference type="ChEBI" id="CHEBI:79333"/>
        <dbReference type="EC" id="3.1.1.96"/>
    </reaction>
</comment>
<comment type="subunit">
    <text evidence="1">Homodimer.</text>
</comment>
<comment type="subcellular location">
    <subcellularLocation>
        <location evidence="1">Cytoplasm</location>
    </subcellularLocation>
</comment>
<comment type="domain">
    <text evidence="1">A Gly-cisPro motif from one monomer fits into the active site of the other monomer to allow specific chiral rejection of L-amino acids.</text>
</comment>
<comment type="similarity">
    <text evidence="1">Belongs to the DTD family.</text>
</comment>
<evidence type="ECO:0000255" key="1">
    <source>
        <dbReference type="HAMAP-Rule" id="MF_00518"/>
    </source>
</evidence>
<reference key="1">
    <citation type="submission" date="2007-05" db="EMBL/GenBank/DDBJ databases">
        <title>Complete sequence of Dehalococcoides sp. BAV1.</title>
        <authorList>
            <consortium name="US DOE Joint Genome Institute"/>
            <person name="Copeland A."/>
            <person name="Lucas S."/>
            <person name="Lapidus A."/>
            <person name="Barry K."/>
            <person name="Detter J.C."/>
            <person name="Glavina del Rio T."/>
            <person name="Hammon N."/>
            <person name="Israni S."/>
            <person name="Pitluck S."/>
            <person name="Lowry S."/>
            <person name="Clum A."/>
            <person name="Schmutz J."/>
            <person name="Larimer F."/>
            <person name="Land M."/>
            <person name="Hauser L."/>
            <person name="Kyrpides N."/>
            <person name="Kim E."/>
            <person name="Ritalahti K.M."/>
            <person name="Loeffler F."/>
            <person name="Richardson P."/>
        </authorList>
    </citation>
    <scope>NUCLEOTIDE SEQUENCE [LARGE SCALE GENOMIC DNA]</scope>
    <source>
        <strain>ATCC BAA-2100 / JCM 16839 / KCTC 5957 / BAV1</strain>
    </source>
</reference>